<proteinExistence type="predicted"/>
<protein>
    <recommendedName>
        <fullName>Uncharacterized protein MJECL02</fullName>
    </recommendedName>
</protein>
<feature type="chain" id="PRO_0000107494" description="Uncharacterized protein MJECL02">
    <location>
        <begin position="1"/>
        <end position="129"/>
    </location>
</feature>
<reference key="1">
    <citation type="journal article" date="1996" name="Science">
        <title>Complete genome sequence of the methanogenic archaeon, Methanococcus jannaschii.</title>
        <authorList>
            <person name="Bult C.J."/>
            <person name="White O."/>
            <person name="Olsen G.J."/>
            <person name="Zhou L."/>
            <person name="Fleischmann R.D."/>
            <person name="Sutton G.G."/>
            <person name="Blake J.A."/>
            <person name="FitzGerald L.M."/>
            <person name="Clayton R.A."/>
            <person name="Gocayne J.D."/>
            <person name="Kerlavage A.R."/>
            <person name="Dougherty B.A."/>
            <person name="Tomb J.-F."/>
            <person name="Adams M.D."/>
            <person name="Reich C.I."/>
            <person name="Overbeek R."/>
            <person name="Kirkness E.F."/>
            <person name="Weinstock K.G."/>
            <person name="Merrick J.M."/>
            <person name="Glodek A."/>
            <person name="Scott J.L."/>
            <person name="Geoghagen N.S.M."/>
            <person name="Weidman J.F."/>
            <person name="Fuhrmann J.L."/>
            <person name="Nguyen D."/>
            <person name="Utterback T.R."/>
            <person name="Kelley J.M."/>
            <person name="Peterson J.D."/>
            <person name="Sadow P.W."/>
            <person name="Hanna M.C."/>
            <person name="Cotton M.D."/>
            <person name="Roberts K.M."/>
            <person name="Hurst M.A."/>
            <person name="Kaine B.P."/>
            <person name="Borodovsky M."/>
            <person name="Klenk H.-P."/>
            <person name="Fraser C.M."/>
            <person name="Smith H.O."/>
            <person name="Woese C.R."/>
            <person name="Venter J.C."/>
        </authorList>
    </citation>
    <scope>NUCLEOTIDE SEQUENCE [LARGE SCALE GENOMIC DNA]</scope>
    <source>
        <strain>ATCC 43067 / DSM 2661 / JAL-1 / JCM 10045 / NBRC 100440</strain>
    </source>
</reference>
<geneLocation type="plasmid">
    <name>large ECE</name>
</geneLocation>
<keyword id="KW-0614">Plasmid</keyword>
<keyword id="KW-1185">Reference proteome</keyword>
<accession>Q60267</accession>
<organism>
    <name type="scientific">Methanocaldococcus jannaschii (strain ATCC 43067 / DSM 2661 / JAL-1 / JCM 10045 / NBRC 100440)</name>
    <name type="common">Methanococcus jannaschii</name>
    <dbReference type="NCBI Taxonomy" id="243232"/>
    <lineage>
        <taxon>Archaea</taxon>
        <taxon>Methanobacteriati</taxon>
        <taxon>Methanobacteriota</taxon>
        <taxon>Methanomada group</taxon>
        <taxon>Methanococci</taxon>
        <taxon>Methanococcales</taxon>
        <taxon>Methanocaldococcaceae</taxon>
        <taxon>Methanocaldococcus</taxon>
    </lineage>
</organism>
<sequence>MLMMSIILSMCIQMIRIKSGLSSVICVYSQMNNFRIFWWDIMTAFEELLELPTIEAIYKLKKLILKMESSKNSEVYYYQGVIKRIIQRLSLLDQEKSLKENLKFCVDNYILSQRTIEDLKTAIEIASKL</sequence>
<name>Y3502_METJA</name>
<gene>
    <name type="ordered locus">MJECL02</name>
</gene>
<dbReference type="EMBL" id="L77118">
    <property type="protein sequence ID" value="AAC37076.1"/>
    <property type="molecule type" value="Genomic_DNA"/>
</dbReference>
<dbReference type="PIR" id="B64510">
    <property type="entry name" value="B64510"/>
</dbReference>
<dbReference type="SMR" id="Q60267"/>
<dbReference type="PaxDb" id="243232-MJ_ECL02"/>
<dbReference type="EnsemblBacteria" id="AAC37076">
    <property type="protein sequence ID" value="AAC37076"/>
    <property type="gene ID" value="MJ_ECL02"/>
</dbReference>
<dbReference type="KEGG" id="mja:MJ_ECL02"/>
<dbReference type="HOGENOM" id="CLU_1943864_0_0_2"/>
<dbReference type="InParanoid" id="Q60267"/>
<dbReference type="Proteomes" id="UP000000805">
    <property type="component" value="Plasmid pDSM2661_1"/>
</dbReference>